<gene>
    <name type="primary">lepB</name>
</gene>
<name>LEP_PSEFL</name>
<dbReference type="EC" id="3.4.21.89"/>
<dbReference type="EMBL" id="X56466">
    <property type="protein sequence ID" value="CAA39839.1"/>
    <property type="molecule type" value="Genomic_DNA"/>
</dbReference>
<dbReference type="PIR" id="S22414">
    <property type="entry name" value="S22414"/>
</dbReference>
<dbReference type="RefSeq" id="WP_032877618.1">
    <property type="nucleotide sequence ID" value="NZ_SPKM01000026.1"/>
</dbReference>
<dbReference type="SMR" id="P26844"/>
<dbReference type="MEROPS" id="S26.001"/>
<dbReference type="eggNOG" id="COG0681">
    <property type="taxonomic scope" value="Bacteria"/>
</dbReference>
<dbReference type="GO" id="GO:0005886">
    <property type="term" value="C:plasma membrane"/>
    <property type="evidence" value="ECO:0007669"/>
    <property type="project" value="UniProtKB-SubCell"/>
</dbReference>
<dbReference type="GO" id="GO:0004252">
    <property type="term" value="F:serine-type endopeptidase activity"/>
    <property type="evidence" value="ECO:0007669"/>
    <property type="project" value="UniProtKB-EC"/>
</dbReference>
<dbReference type="GO" id="GO:0006465">
    <property type="term" value="P:signal peptide processing"/>
    <property type="evidence" value="ECO:0007669"/>
    <property type="project" value="InterPro"/>
</dbReference>
<dbReference type="CDD" id="cd06530">
    <property type="entry name" value="S26_SPase_I"/>
    <property type="match status" value="1"/>
</dbReference>
<dbReference type="Gene3D" id="2.10.109.10">
    <property type="entry name" value="Umud Fragment, subunit A"/>
    <property type="match status" value="1"/>
</dbReference>
<dbReference type="InterPro" id="IPR036286">
    <property type="entry name" value="LexA/Signal_pep-like_sf"/>
</dbReference>
<dbReference type="InterPro" id="IPR000223">
    <property type="entry name" value="Pept_S26A_signal_pept_1"/>
</dbReference>
<dbReference type="InterPro" id="IPR019758">
    <property type="entry name" value="Pept_S26A_signal_pept_1_CS"/>
</dbReference>
<dbReference type="InterPro" id="IPR019757">
    <property type="entry name" value="Pept_S26A_signal_pept_1_Lys-AS"/>
</dbReference>
<dbReference type="InterPro" id="IPR019756">
    <property type="entry name" value="Pept_S26A_signal_pept_1_Ser-AS"/>
</dbReference>
<dbReference type="InterPro" id="IPR019533">
    <property type="entry name" value="Peptidase_S26"/>
</dbReference>
<dbReference type="NCBIfam" id="TIGR02227">
    <property type="entry name" value="sigpep_I_bact"/>
    <property type="match status" value="1"/>
</dbReference>
<dbReference type="PANTHER" id="PTHR43390:SF1">
    <property type="entry name" value="CHLOROPLAST PROCESSING PEPTIDASE"/>
    <property type="match status" value="1"/>
</dbReference>
<dbReference type="PANTHER" id="PTHR43390">
    <property type="entry name" value="SIGNAL PEPTIDASE I"/>
    <property type="match status" value="1"/>
</dbReference>
<dbReference type="Pfam" id="PF10502">
    <property type="entry name" value="Peptidase_S26"/>
    <property type="match status" value="1"/>
</dbReference>
<dbReference type="PRINTS" id="PR00727">
    <property type="entry name" value="LEADERPTASE"/>
</dbReference>
<dbReference type="SUPFAM" id="SSF51306">
    <property type="entry name" value="LexA/Signal peptidase"/>
    <property type="match status" value="1"/>
</dbReference>
<dbReference type="PROSITE" id="PS00501">
    <property type="entry name" value="SPASE_I_1"/>
    <property type="match status" value="1"/>
</dbReference>
<dbReference type="PROSITE" id="PS00760">
    <property type="entry name" value="SPASE_I_2"/>
    <property type="match status" value="1"/>
</dbReference>
<dbReference type="PROSITE" id="PS00761">
    <property type="entry name" value="SPASE_I_3"/>
    <property type="match status" value="1"/>
</dbReference>
<organism>
    <name type="scientific">Pseudomonas fluorescens</name>
    <dbReference type="NCBI Taxonomy" id="294"/>
    <lineage>
        <taxon>Bacteria</taxon>
        <taxon>Pseudomonadati</taxon>
        <taxon>Pseudomonadota</taxon>
        <taxon>Gammaproteobacteria</taxon>
        <taxon>Pseudomonadales</taxon>
        <taxon>Pseudomonadaceae</taxon>
        <taxon>Pseudomonas</taxon>
    </lineage>
</organism>
<feature type="chain" id="PRO_0000109514" description="Signal peptidase I">
    <location>
        <begin position="1"/>
        <end position="284"/>
    </location>
</feature>
<feature type="transmembrane region" description="Helical" evidence="2">
    <location>
        <begin position="4"/>
        <end position="22"/>
    </location>
</feature>
<feature type="topological domain" description="Cytoplasmic" evidence="2">
    <location>
        <begin position="23"/>
        <end position="58"/>
    </location>
</feature>
<feature type="transmembrane region" description="Helical" evidence="2">
    <location>
        <begin position="59"/>
        <end position="77"/>
    </location>
</feature>
<feature type="topological domain" description="Periplasmic" evidence="2">
    <location>
        <begin position="78"/>
        <end position="284"/>
    </location>
</feature>
<feature type="active site" evidence="1">
    <location>
        <position position="90"/>
    </location>
</feature>
<feature type="active site" evidence="1">
    <location>
        <position position="145"/>
    </location>
</feature>
<keyword id="KW-0997">Cell inner membrane</keyword>
<keyword id="KW-1003">Cell membrane</keyword>
<keyword id="KW-0378">Hydrolase</keyword>
<keyword id="KW-0472">Membrane</keyword>
<keyword id="KW-0645">Protease</keyword>
<keyword id="KW-0812">Transmembrane</keyword>
<keyword id="KW-1133">Transmembrane helix</keyword>
<reference key="1">
    <citation type="journal article" date="1992" name="Biochem. J.">
        <title>On the catalytic mechanism of prokaryotic leader peptidase 1.</title>
        <authorList>
            <person name="Black M.T."/>
            <person name="Munn J.G.R."/>
            <person name="Allsop A.E."/>
        </authorList>
    </citation>
    <scope>NUCLEOTIDE SEQUENCE [GENOMIC DNA]</scope>
    <source>
        <strain>ATCC 49323 / NCIMB 10586</strain>
    </source>
</reference>
<accession>P26844</accession>
<sequence>MSLNFPLLLVIAVAVCGLLALLDLVFFAPRRRSAIASYQGSVSQPDAVVIEKLNKEPLLVEYGKSFFPVLFIVLVLRSFLVEPFQIPSGSMKPTLDVGDFILVNKFSYGIRLPVIDKKVIEVGDPQRGDVMVFRYPSDPNVNYIKRVVGLPGDVVRYTSDKRLFINGESVAEKLLGAEPNTLGSAELYQEKLGAVEHEIRKEMSRYRAMPDGQWKVPAGHYFMMGDNRDNSNDSRYWDDPNIPKDLLGMVPDENIVGKAFAVWMSWPEPKLSHLPNFSRVGLIK</sequence>
<evidence type="ECO:0000250" key="1"/>
<evidence type="ECO:0000255" key="2"/>
<evidence type="ECO:0000305" key="3"/>
<protein>
    <recommendedName>
        <fullName>Signal peptidase I</fullName>
        <shortName>SPase I</shortName>
        <ecNumber>3.4.21.89</ecNumber>
    </recommendedName>
    <alternativeName>
        <fullName>Leader peptidase I</fullName>
    </alternativeName>
</protein>
<comment type="catalytic activity">
    <reaction>
        <text>Cleavage of hydrophobic, N-terminal signal or leader sequences from secreted and periplasmic proteins.</text>
        <dbReference type="EC" id="3.4.21.89"/>
    </reaction>
</comment>
<comment type="subcellular location">
    <subcellularLocation>
        <location>Cell inner membrane</location>
        <topology>Multi-pass membrane protein</topology>
    </subcellularLocation>
</comment>
<comment type="similarity">
    <text evidence="3">Belongs to the peptidase S26 family.</text>
</comment>
<proteinExistence type="inferred from homology"/>